<reference key="1">
    <citation type="submission" date="2005-09" db="EMBL/GenBank/DDBJ databases">
        <authorList>
            <person name="Glass J.I."/>
            <person name="Lartigue C."/>
            <person name="Pfannkoch C."/>
            <person name="Baden-Tillson H."/>
            <person name="Smith H.O."/>
            <person name="Venter J.C."/>
            <person name="Roske K."/>
            <person name="Wise K.S."/>
            <person name="Calcutt M.J."/>
            <person name="Nelson W.C."/>
            <person name="Nierman W.C."/>
        </authorList>
    </citation>
    <scope>NUCLEOTIDE SEQUENCE [LARGE SCALE GENOMIC DNA]</scope>
    <source>
        <strain>California kid / ATCC 27343 / NCTC 10154</strain>
    </source>
</reference>
<dbReference type="EMBL" id="CP000123">
    <property type="protein sequence ID" value="ABC01681.1"/>
    <property type="molecule type" value="Genomic_DNA"/>
</dbReference>
<dbReference type="RefSeq" id="WP_011386999.1">
    <property type="nucleotide sequence ID" value="NC_007633.1"/>
</dbReference>
<dbReference type="SMR" id="Q2ST19"/>
<dbReference type="GeneID" id="23778945"/>
<dbReference type="KEGG" id="mcp:MCAP_0100"/>
<dbReference type="HOGENOM" id="CLU_114845_0_0_14"/>
<dbReference type="PhylomeDB" id="Q2ST19"/>
<dbReference type="Proteomes" id="UP000001928">
    <property type="component" value="Chromosome"/>
</dbReference>
<dbReference type="GO" id="GO:0010181">
    <property type="term" value="F:FMN binding"/>
    <property type="evidence" value="ECO:0007669"/>
    <property type="project" value="InterPro"/>
</dbReference>
<dbReference type="GO" id="GO:0036211">
    <property type="term" value="P:protein modification process"/>
    <property type="evidence" value="ECO:0007669"/>
    <property type="project" value="InterPro"/>
</dbReference>
<dbReference type="Gene3D" id="3.40.50.360">
    <property type="match status" value="1"/>
</dbReference>
<dbReference type="HAMAP" id="MF_00128">
    <property type="entry name" value="NrdI"/>
    <property type="match status" value="1"/>
</dbReference>
<dbReference type="InterPro" id="IPR029039">
    <property type="entry name" value="Flavoprotein-like_sf"/>
</dbReference>
<dbReference type="InterPro" id="IPR020852">
    <property type="entry name" value="RNR_Ib_NrdI_bac"/>
</dbReference>
<dbReference type="InterPro" id="IPR004465">
    <property type="entry name" value="RNR_NrdI"/>
</dbReference>
<dbReference type="NCBIfam" id="TIGR00333">
    <property type="entry name" value="nrdI"/>
    <property type="match status" value="1"/>
</dbReference>
<dbReference type="PANTHER" id="PTHR37297">
    <property type="entry name" value="PROTEIN NRDI"/>
    <property type="match status" value="1"/>
</dbReference>
<dbReference type="PANTHER" id="PTHR37297:SF1">
    <property type="entry name" value="PROTEIN NRDI"/>
    <property type="match status" value="1"/>
</dbReference>
<dbReference type="Pfam" id="PF07972">
    <property type="entry name" value="Flavodoxin_NdrI"/>
    <property type="match status" value="1"/>
</dbReference>
<dbReference type="PIRSF" id="PIRSF005087">
    <property type="entry name" value="NrdI"/>
    <property type="match status" value="1"/>
</dbReference>
<dbReference type="SUPFAM" id="SSF52218">
    <property type="entry name" value="Flavoproteins"/>
    <property type="match status" value="1"/>
</dbReference>
<comment type="function">
    <text evidence="1">Probably involved in ribonucleotide reductase function.</text>
</comment>
<comment type="similarity">
    <text evidence="1">Belongs to the NrdI family.</text>
</comment>
<gene>
    <name evidence="1" type="primary">nrdI</name>
    <name type="ordered locus">MCAP_0100</name>
</gene>
<evidence type="ECO:0000255" key="1">
    <source>
        <dbReference type="HAMAP-Rule" id="MF_00128"/>
    </source>
</evidence>
<name>NRDI_MYCCT</name>
<organism>
    <name type="scientific">Mycoplasma capricolum subsp. capricolum (strain California kid / ATCC 27343 / NCTC 10154)</name>
    <dbReference type="NCBI Taxonomy" id="340047"/>
    <lineage>
        <taxon>Bacteria</taxon>
        <taxon>Bacillati</taxon>
        <taxon>Mycoplasmatota</taxon>
        <taxon>Mollicutes</taxon>
        <taxon>Mycoplasmataceae</taxon>
        <taxon>Mycoplasma</taxon>
    </lineage>
</organism>
<feature type="chain" id="PRO_1000016508" description="Protein NrdI">
    <location>
        <begin position="1"/>
        <end position="157"/>
    </location>
</feature>
<proteinExistence type="inferred from homology"/>
<sequence length="157" mass="17861">MHSNVKKVTDKDVIKPVGVPFVVYFSSISNNTHRFIQKLEIENLRIPYEIEQSISVDRDYVLVTPTYSGGGEYVEGAVPKQVIKFLNNKQNRSFCRGVISSGNTNFGDTFGIAGPIISKKLNVPFLYQFELLGTQHDVSQIKQILFKFWEDGNNERK</sequence>
<accession>Q2ST19</accession>
<protein>
    <recommendedName>
        <fullName evidence="1">Protein NrdI</fullName>
    </recommendedName>
</protein>